<feature type="chain" id="PRO_1000131677" description="Chaperone protein HscA">
    <location>
        <begin position="1"/>
        <end position="616"/>
    </location>
</feature>
<gene>
    <name evidence="1" type="primary">hscA</name>
    <name type="ordered locus">ECUMN_2846</name>
</gene>
<sequence length="616" mass="65729">MALLQISEPGLSAAPHQRRLAAGIDLGTTNSLVATVRSGQAETLADHEGRHLLPSVVHYQQQGHSVGYDARTNAALDTANTISSVKRLMGRSLADIQQRYPHLPYQFQASENGLPMIETAAGLLNPVRVSADILKALAARATEALAGELDGVVITVPAYFDDAQRQGTKDAARLAGLHVLRLLNEPTAAAIAYGLDSGQEGVIAVYDLGGGTFDISILRLSRGVFEVLATGGDSALGGDDFDHLLADYIREQAGIPDRSDNRVQRELLDAAIAAKIALSDADSVTVNVAGWQGEISREQFNELIAPLVKRTLLACRRVLKDAGVEADEVMEVVMVGGSTRVPLVRERVGEFFGRPPLTSIDPDKVVAIGAAIQADILVGNKPDSEMLLLDVIPLSLGLETMGGLVEKVIPRNTTIPVARAQDFTTFKDGQTAMSIHVMQGERELVQDCRSLARFALRGIPALPAGGAHIRVTFQVDADGLLSVTAMEKSTGVEASIQVKPSYGLTDSEIASMIKDSMSYAEQDVKARMLAEQKVEAARVLESLHGALAADAALLSTAERQVIDDAAAHLSEVAQGDDVDAIEQAIKNVDKQTQDFAARRMDQSVRRALKGHSVDEV</sequence>
<proteinExistence type="inferred from homology"/>
<accession>B7N6B3</accession>
<reference key="1">
    <citation type="journal article" date="2009" name="PLoS Genet.">
        <title>Organised genome dynamics in the Escherichia coli species results in highly diverse adaptive paths.</title>
        <authorList>
            <person name="Touchon M."/>
            <person name="Hoede C."/>
            <person name="Tenaillon O."/>
            <person name="Barbe V."/>
            <person name="Baeriswyl S."/>
            <person name="Bidet P."/>
            <person name="Bingen E."/>
            <person name="Bonacorsi S."/>
            <person name="Bouchier C."/>
            <person name="Bouvet O."/>
            <person name="Calteau A."/>
            <person name="Chiapello H."/>
            <person name="Clermont O."/>
            <person name="Cruveiller S."/>
            <person name="Danchin A."/>
            <person name="Diard M."/>
            <person name="Dossat C."/>
            <person name="Karoui M.E."/>
            <person name="Frapy E."/>
            <person name="Garry L."/>
            <person name="Ghigo J.M."/>
            <person name="Gilles A.M."/>
            <person name="Johnson J."/>
            <person name="Le Bouguenec C."/>
            <person name="Lescat M."/>
            <person name="Mangenot S."/>
            <person name="Martinez-Jehanne V."/>
            <person name="Matic I."/>
            <person name="Nassif X."/>
            <person name="Oztas S."/>
            <person name="Petit M.A."/>
            <person name="Pichon C."/>
            <person name="Rouy Z."/>
            <person name="Ruf C.S."/>
            <person name="Schneider D."/>
            <person name="Tourret J."/>
            <person name="Vacherie B."/>
            <person name="Vallenet D."/>
            <person name="Medigue C."/>
            <person name="Rocha E.P.C."/>
            <person name="Denamur E."/>
        </authorList>
    </citation>
    <scope>NUCLEOTIDE SEQUENCE [LARGE SCALE GENOMIC DNA]</scope>
    <source>
        <strain>UMN026 / ExPEC</strain>
    </source>
</reference>
<protein>
    <recommendedName>
        <fullName evidence="1">Chaperone protein HscA</fullName>
    </recommendedName>
    <alternativeName>
        <fullName evidence="1">Hsc66</fullName>
    </alternativeName>
</protein>
<comment type="function">
    <text evidence="1">Chaperone involved in the maturation of iron-sulfur cluster-containing proteins. Has a low intrinsic ATPase activity which is markedly stimulated by HscB. Involved in the maturation of IscU.</text>
</comment>
<comment type="similarity">
    <text evidence="1">Belongs to the heat shock protein 70 family.</text>
</comment>
<dbReference type="EMBL" id="CU928163">
    <property type="protein sequence ID" value="CAR14022.1"/>
    <property type="molecule type" value="Genomic_DNA"/>
</dbReference>
<dbReference type="RefSeq" id="WP_001196624.1">
    <property type="nucleotide sequence ID" value="NC_011751.1"/>
</dbReference>
<dbReference type="RefSeq" id="YP_002413548.1">
    <property type="nucleotide sequence ID" value="NC_011751.1"/>
</dbReference>
<dbReference type="SMR" id="B7N6B3"/>
<dbReference type="STRING" id="585056.ECUMN_2846"/>
<dbReference type="KEGG" id="eum:ECUMN_2846"/>
<dbReference type="PATRIC" id="fig|585056.7.peg.3032"/>
<dbReference type="HOGENOM" id="CLU_005965_2_1_6"/>
<dbReference type="Proteomes" id="UP000007097">
    <property type="component" value="Chromosome"/>
</dbReference>
<dbReference type="GO" id="GO:0005524">
    <property type="term" value="F:ATP binding"/>
    <property type="evidence" value="ECO:0007669"/>
    <property type="project" value="UniProtKB-KW"/>
</dbReference>
<dbReference type="GO" id="GO:0016887">
    <property type="term" value="F:ATP hydrolysis activity"/>
    <property type="evidence" value="ECO:0007669"/>
    <property type="project" value="UniProtKB-UniRule"/>
</dbReference>
<dbReference type="GO" id="GO:0140662">
    <property type="term" value="F:ATP-dependent protein folding chaperone"/>
    <property type="evidence" value="ECO:0007669"/>
    <property type="project" value="InterPro"/>
</dbReference>
<dbReference type="GO" id="GO:0051082">
    <property type="term" value="F:unfolded protein binding"/>
    <property type="evidence" value="ECO:0007669"/>
    <property type="project" value="InterPro"/>
</dbReference>
<dbReference type="GO" id="GO:0016226">
    <property type="term" value="P:iron-sulfur cluster assembly"/>
    <property type="evidence" value="ECO:0007669"/>
    <property type="project" value="InterPro"/>
</dbReference>
<dbReference type="CDD" id="cd10236">
    <property type="entry name" value="ASKHA_NBD_HSP70_HscA"/>
    <property type="match status" value="1"/>
</dbReference>
<dbReference type="FunFam" id="1.20.1270.10:FF:000006">
    <property type="entry name" value="Chaperone protein HscA"/>
    <property type="match status" value="1"/>
</dbReference>
<dbReference type="FunFam" id="3.30.420.40:FF:000046">
    <property type="entry name" value="Chaperone protein HscA"/>
    <property type="match status" value="1"/>
</dbReference>
<dbReference type="FunFam" id="3.90.640.10:FF:000013">
    <property type="entry name" value="Chaperone protein HscA"/>
    <property type="match status" value="1"/>
</dbReference>
<dbReference type="FunFam" id="2.60.34.10:FF:000005">
    <property type="entry name" value="Chaperone protein HscA homolog"/>
    <property type="match status" value="1"/>
</dbReference>
<dbReference type="FunFam" id="3.30.420.40:FF:000020">
    <property type="entry name" value="Chaperone protein HscA homolog"/>
    <property type="match status" value="1"/>
</dbReference>
<dbReference type="Gene3D" id="1.20.1270.10">
    <property type="match status" value="1"/>
</dbReference>
<dbReference type="Gene3D" id="3.30.420.40">
    <property type="match status" value="2"/>
</dbReference>
<dbReference type="Gene3D" id="3.90.640.10">
    <property type="entry name" value="Actin, Chain A, domain 4"/>
    <property type="match status" value="1"/>
</dbReference>
<dbReference type="Gene3D" id="2.60.34.10">
    <property type="entry name" value="Substrate Binding Domain Of DNAk, Chain A, domain 1"/>
    <property type="match status" value="1"/>
</dbReference>
<dbReference type="HAMAP" id="MF_00679">
    <property type="entry name" value="HscA"/>
    <property type="match status" value="1"/>
</dbReference>
<dbReference type="InterPro" id="IPR043129">
    <property type="entry name" value="ATPase_NBD"/>
</dbReference>
<dbReference type="InterPro" id="IPR018181">
    <property type="entry name" value="Heat_shock_70_CS"/>
</dbReference>
<dbReference type="InterPro" id="IPR042039">
    <property type="entry name" value="HscA_NBD"/>
</dbReference>
<dbReference type="InterPro" id="IPR029048">
    <property type="entry name" value="HSP70_C_sf"/>
</dbReference>
<dbReference type="InterPro" id="IPR029047">
    <property type="entry name" value="HSP70_peptide-bd_sf"/>
</dbReference>
<dbReference type="InterPro" id="IPR013126">
    <property type="entry name" value="Hsp_70_fam"/>
</dbReference>
<dbReference type="InterPro" id="IPR010236">
    <property type="entry name" value="ISC_FeS_clus_asmbl_HscA"/>
</dbReference>
<dbReference type="NCBIfam" id="TIGR01991">
    <property type="entry name" value="HscA"/>
    <property type="match status" value="1"/>
</dbReference>
<dbReference type="NCBIfam" id="NF003520">
    <property type="entry name" value="PRK05183.1"/>
    <property type="match status" value="1"/>
</dbReference>
<dbReference type="PANTHER" id="PTHR19375">
    <property type="entry name" value="HEAT SHOCK PROTEIN 70KDA"/>
    <property type="match status" value="1"/>
</dbReference>
<dbReference type="Pfam" id="PF00012">
    <property type="entry name" value="HSP70"/>
    <property type="match status" value="1"/>
</dbReference>
<dbReference type="PRINTS" id="PR00301">
    <property type="entry name" value="HEATSHOCK70"/>
</dbReference>
<dbReference type="SUPFAM" id="SSF53067">
    <property type="entry name" value="Actin-like ATPase domain"/>
    <property type="match status" value="2"/>
</dbReference>
<dbReference type="SUPFAM" id="SSF100934">
    <property type="entry name" value="Heat shock protein 70kD (HSP70), C-terminal subdomain"/>
    <property type="match status" value="1"/>
</dbReference>
<dbReference type="SUPFAM" id="SSF100920">
    <property type="entry name" value="Heat shock protein 70kD (HSP70), peptide-binding domain"/>
    <property type="match status" value="1"/>
</dbReference>
<dbReference type="PROSITE" id="PS00297">
    <property type="entry name" value="HSP70_1"/>
    <property type="match status" value="1"/>
</dbReference>
<dbReference type="PROSITE" id="PS00329">
    <property type="entry name" value="HSP70_2"/>
    <property type="match status" value="1"/>
</dbReference>
<dbReference type="PROSITE" id="PS01036">
    <property type="entry name" value="HSP70_3"/>
    <property type="match status" value="1"/>
</dbReference>
<organism>
    <name type="scientific">Escherichia coli O17:K52:H18 (strain UMN026 / ExPEC)</name>
    <dbReference type="NCBI Taxonomy" id="585056"/>
    <lineage>
        <taxon>Bacteria</taxon>
        <taxon>Pseudomonadati</taxon>
        <taxon>Pseudomonadota</taxon>
        <taxon>Gammaproteobacteria</taxon>
        <taxon>Enterobacterales</taxon>
        <taxon>Enterobacteriaceae</taxon>
        <taxon>Escherichia</taxon>
    </lineage>
</organism>
<evidence type="ECO:0000255" key="1">
    <source>
        <dbReference type="HAMAP-Rule" id="MF_00679"/>
    </source>
</evidence>
<keyword id="KW-0067">ATP-binding</keyword>
<keyword id="KW-0143">Chaperone</keyword>
<keyword id="KW-0547">Nucleotide-binding</keyword>
<name>HSCA_ECOLU</name>